<comment type="function">
    <text evidence="2">NADH-dependent reductase for DPH3 and cytochrome b5. Required for the first step of diphthamide biosynthesis, a post-translational modification of histidine which occurs in elongation factor 2. DPH1 and DPH2 transfer a 3-amino-3-carboxypropyl (ACP) group from S-adenosyl-L-methionine (SAM) to a histidine residue, the reaction is assisted by a reduction system comprising DPH3 and a NADH-dependent reductase, predominantly CBR1. By reducing DPH3, also involved in the formation of the tRNA wobble base modification mcm5s 2U (5-methoxycarbonylmethyl-2-thiouridine), mediated by the elongator complex. The cytochrome b5/NADH cytochrome b5 reductase electron transfer system supports the catalytic activity of several sterol biosynthetic enzymes.</text>
</comment>
<comment type="catalytic activity">
    <reaction evidence="2">
        <text>2 Fe(III)-[cytochrome b5] + NADH = 2 Fe(II)-[cytochrome b5] + NAD(+) + H(+)</text>
        <dbReference type="Rhea" id="RHEA:46680"/>
        <dbReference type="Rhea" id="RHEA-COMP:10438"/>
        <dbReference type="Rhea" id="RHEA-COMP:10439"/>
        <dbReference type="ChEBI" id="CHEBI:15378"/>
        <dbReference type="ChEBI" id="CHEBI:29033"/>
        <dbReference type="ChEBI" id="CHEBI:29034"/>
        <dbReference type="ChEBI" id="CHEBI:57540"/>
        <dbReference type="ChEBI" id="CHEBI:57945"/>
        <dbReference type="EC" id="1.6.2.2"/>
    </reaction>
</comment>
<comment type="catalytic activity">
    <reaction evidence="2">
        <text>2 Fe(3+)-[Dph3] + NADH = 2 Fe(2+)-[Dph3] + NAD(+) + H(+)</text>
        <dbReference type="Rhea" id="RHEA:71231"/>
        <dbReference type="Rhea" id="RHEA-COMP:18002"/>
        <dbReference type="Rhea" id="RHEA-COMP:18003"/>
        <dbReference type="ChEBI" id="CHEBI:15378"/>
        <dbReference type="ChEBI" id="CHEBI:29033"/>
        <dbReference type="ChEBI" id="CHEBI:29034"/>
        <dbReference type="ChEBI" id="CHEBI:57540"/>
        <dbReference type="ChEBI" id="CHEBI:57945"/>
        <dbReference type="ChEBI" id="CHEBI:83228"/>
    </reaction>
    <physiologicalReaction direction="left-to-right" evidence="2">
        <dbReference type="Rhea" id="RHEA:71232"/>
    </physiologicalReaction>
</comment>
<comment type="cofactor">
    <cofactor evidence="3">
        <name>FAD</name>
        <dbReference type="ChEBI" id="CHEBI:57692"/>
    </cofactor>
</comment>
<comment type="pathway">
    <text evidence="2">Protein modification; peptidyl-diphthamide biosynthesis.</text>
</comment>
<comment type="subunit">
    <text evidence="2">Monomer. Component of the 2-(3-amino-3-carboxypropyl)histidine synthase complex composed of DPH1, DPH2, DPH3 and a NADH-dependent reductase, predominantly CBR1.</text>
</comment>
<comment type="subcellular location">
    <subcellularLocation>
        <location evidence="2">Mitochondrion outer membrane</location>
        <topology evidence="3">Single-pass membrane protein</topology>
    </subcellularLocation>
</comment>
<comment type="similarity">
    <text evidence="5">Belongs to the flavoprotein pyridine nucleotide cytochrome reductase family.</text>
</comment>
<organism>
    <name type="scientific">Scheffersomyces stipitis (strain ATCC 58785 / CBS 6054 / NBRC 10063 / NRRL Y-11545)</name>
    <name type="common">Yeast</name>
    <name type="synonym">Pichia stipitis</name>
    <dbReference type="NCBI Taxonomy" id="322104"/>
    <lineage>
        <taxon>Eukaryota</taxon>
        <taxon>Fungi</taxon>
        <taxon>Dikarya</taxon>
        <taxon>Ascomycota</taxon>
        <taxon>Saccharomycotina</taxon>
        <taxon>Pichiomycetes</taxon>
        <taxon>Debaryomycetaceae</taxon>
        <taxon>Scheffersomyces</taxon>
    </lineage>
</organism>
<feature type="chain" id="PRO_0000330163" description="NADH-cytochrome b5 reductase 1">
    <location>
        <begin position="1"/>
        <end position="284"/>
    </location>
</feature>
<feature type="transmembrane region" description="Helical" evidence="3">
    <location>
        <begin position="8"/>
        <end position="28"/>
    </location>
</feature>
<feature type="domain" description="FAD-binding FR-type" evidence="4">
    <location>
        <begin position="41"/>
        <end position="144"/>
    </location>
</feature>
<feature type="binding site" evidence="1">
    <location>
        <begin position="124"/>
        <end position="139"/>
    </location>
    <ligand>
        <name>FAD</name>
        <dbReference type="ChEBI" id="CHEBI:57692"/>
    </ligand>
</feature>
<feature type="binding site" evidence="1">
    <location>
        <begin position="150"/>
        <end position="182"/>
    </location>
    <ligand>
        <name>FAD</name>
        <dbReference type="ChEBI" id="CHEBI:57692"/>
    </ligand>
</feature>
<gene>
    <name type="primary">CBR1</name>
    <name type="ORF">PICST_68997</name>
</gene>
<keyword id="KW-0274">FAD</keyword>
<keyword id="KW-0285">Flavoprotein</keyword>
<keyword id="KW-0472">Membrane</keyword>
<keyword id="KW-0496">Mitochondrion</keyword>
<keyword id="KW-1000">Mitochondrion outer membrane</keyword>
<keyword id="KW-0520">NAD</keyword>
<keyword id="KW-0560">Oxidoreductase</keyword>
<keyword id="KW-1185">Reference proteome</keyword>
<keyword id="KW-0808">Transferase</keyword>
<keyword id="KW-0812">Transmembrane</keyword>
<keyword id="KW-1133">Transmembrane helix</keyword>
<protein>
    <recommendedName>
        <fullName>NADH-cytochrome b5 reductase 1</fullName>
        <ecNumber evidence="2">1.6.2.2</ecNumber>
    </recommendedName>
    <alternativeName>
        <fullName>Microsomal cytochrome b reductase</fullName>
    </alternativeName>
</protein>
<dbReference type="EC" id="1.6.2.2" evidence="2"/>
<dbReference type="EMBL" id="AAVQ01000001">
    <property type="protein sequence ID" value="EAZ63709.2"/>
    <property type="molecule type" value="Genomic_DNA"/>
</dbReference>
<dbReference type="RefSeq" id="XP_001387732.2">
    <property type="nucleotide sequence ID" value="XM_001387695.1"/>
</dbReference>
<dbReference type="SMR" id="A3GF86"/>
<dbReference type="FunCoup" id="A3GF86">
    <property type="interactions" value="282"/>
</dbReference>
<dbReference type="STRING" id="322104.A3GF86"/>
<dbReference type="GeneID" id="4850935"/>
<dbReference type="KEGG" id="pic:PICST_68997"/>
<dbReference type="eggNOG" id="KOG0534">
    <property type="taxonomic scope" value="Eukaryota"/>
</dbReference>
<dbReference type="HOGENOM" id="CLU_003827_9_0_1"/>
<dbReference type="InParanoid" id="A3GF86"/>
<dbReference type="OMA" id="VQIFMCG"/>
<dbReference type="OrthoDB" id="432685at2759"/>
<dbReference type="UniPathway" id="UPA00559"/>
<dbReference type="Proteomes" id="UP000002258">
    <property type="component" value="Chromosome 1"/>
</dbReference>
<dbReference type="GO" id="GO:0005783">
    <property type="term" value="C:endoplasmic reticulum"/>
    <property type="evidence" value="ECO:0007669"/>
    <property type="project" value="TreeGrafter"/>
</dbReference>
<dbReference type="GO" id="GO:0005741">
    <property type="term" value="C:mitochondrial outer membrane"/>
    <property type="evidence" value="ECO:0007669"/>
    <property type="project" value="UniProtKB-SubCell"/>
</dbReference>
<dbReference type="GO" id="GO:0005886">
    <property type="term" value="C:plasma membrane"/>
    <property type="evidence" value="ECO:0007669"/>
    <property type="project" value="TreeGrafter"/>
</dbReference>
<dbReference type="GO" id="GO:0090560">
    <property type="term" value="F:2-(3-amino-3-carboxypropyl)histidine synthase activity"/>
    <property type="evidence" value="ECO:0007669"/>
    <property type="project" value="EnsemblFungi"/>
</dbReference>
<dbReference type="GO" id="GO:0004128">
    <property type="term" value="F:cytochrome-b5 reductase activity, acting on NAD(P)H"/>
    <property type="evidence" value="ECO:0000250"/>
    <property type="project" value="UniProtKB"/>
</dbReference>
<dbReference type="GO" id="GO:0003954">
    <property type="term" value="F:NADH dehydrogenase activity"/>
    <property type="evidence" value="ECO:0000250"/>
    <property type="project" value="UniProtKB"/>
</dbReference>
<dbReference type="GO" id="GO:0017183">
    <property type="term" value="P:protein histidyl modification to diphthamide"/>
    <property type="evidence" value="ECO:0000250"/>
    <property type="project" value="UniProtKB"/>
</dbReference>
<dbReference type="GO" id="GO:0002926">
    <property type="term" value="P:tRNA wobble base 5-methoxycarbonylmethyl-2-thiouridinylation"/>
    <property type="evidence" value="ECO:0000250"/>
    <property type="project" value="UniProtKB"/>
</dbReference>
<dbReference type="CDD" id="cd06183">
    <property type="entry name" value="cyt_b5_reduct_like"/>
    <property type="match status" value="1"/>
</dbReference>
<dbReference type="FunFam" id="2.40.30.10:FF:000032">
    <property type="entry name" value="NADH-cytochrome b5 reductase"/>
    <property type="match status" value="1"/>
</dbReference>
<dbReference type="FunFam" id="3.40.50.80:FF:000019">
    <property type="entry name" value="NADH-cytochrome b5 reductase"/>
    <property type="match status" value="1"/>
</dbReference>
<dbReference type="Gene3D" id="3.40.50.80">
    <property type="entry name" value="Nucleotide-binding domain of ferredoxin-NADP reductase (FNR) module"/>
    <property type="match status" value="1"/>
</dbReference>
<dbReference type="Gene3D" id="2.40.30.10">
    <property type="entry name" value="Translation factors"/>
    <property type="match status" value="1"/>
</dbReference>
<dbReference type="InterPro" id="IPR001834">
    <property type="entry name" value="CBR-like"/>
</dbReference>
<dbReference type="InterPro" id="IPR008333">
    <property type="entry name" value="Cbr1-like_FAD-bd_dom"/>
</dbReference>
<dbReference type="InterPro" id="IPR017927">
    <property type="entry name" value="FAD-bd_FR_type"/>
</dbReference>
<dbReference type="InterPro" id="IPR001709">
    <property type="entry name" value="Flavoprot_Pyr_Nucl_cyt_Rdtase"/>
</dbReference>
<dbReference type="InterPro" id="IPR039261">
    <property type="entry name" value="FNR_nucleotide-bd"/>
</dbReference>
<dbReference type="InterPro" id="IPR001433">
    <property type="entry name" value="OxRdtase_FAD/NAD-bd"/>
</dbReference>
<dbReference type="InterPro" id="IPR017938">
    <property type="entry name" value="Riboflavin_synthase-like_b-brl"/>
</dbReference>
<dbReference type="PANTHER" id="PTHR19370">
    <property type="entry name" value="NADH-CYTOCHROME B5 REDUCTASE"/>
    <property type="match status" value="1"/>
</dbReference>
<dbReference type="PANTHER" id="PTHR19370:SF184">
    <property type="entry name" value="NADH-CYTOCHROME B5 REDUCTASE-LIKE"/>
    <property type="match status" value="1"/>
</dbReference>
<dbReference type="Pfam" id="PF00970">
    <property type="entry name" value="FAD_binding_6"/>
    <property type="match status" value="1"/>
</dbReference>
<dbReference type="Pfam" id="PF00175">
    <property type="entry name" value="NAD_binding_1"/>
    <property type="match status" value="1"/>
</dbReference>
<dbReference type="PRINTS" id="PR00406">
    <property type="entry name" value="CYTB5RDTASE"/>
</dbReference>
<dbReference type="PRINTS" id="PR00371">
    <property type="entry name" value="FPNCR"/>
</dbReference>
<dbReference type="SUPFAM" id="SSF52343">
    <property type="entry name" value="Ferredoxin reductase-like, C-terminal NADP-linked domain"/>
    <property type="match status" value="1"/>
</dbReference>
<dbReference type="SUPFAM" id="SSF63380">
    <property type="entry name" value="Riboflavin synthase domain-like"/>
    <property type="match status" value="1"/>
</dbReference>
<dbReference type="PROSITE" id="PS51384">
    <property type="entry name" value="FAD_FR"/>
    <property type="match status" value="1"/>
</dbReference>
<sequence length="284" mass="31274">MADTEPSPLFVFSTIAIIISTFVIFYFVQQSKKNTPVLKPDTFQKFPLIEKTRVSHNSSVYRFGLPKSTDRLGLPIGQHISIGATIGGKEVVRSYTPISTDDELGYFDLLIKTYENGNISKHVDSKKVGEYVEIRGPKGFFTYTPNMVKSFGMIAGGTGIAPMYQIITAILRNPADKTKISLIYANVTESDILLKSELDKWAEEHPDNFSVHYVLNEAPENWKGSVGFVTPEIIDSKLPKASDDSNLLLCGPPPMISAMKKAAVGLGFAKAKPVSKLGDQVFVF</sequence>
<reference key="1">
    <citation type="journal article" date="2007" name="Nat. Biotechnol.">
        <title>Genome sequence of the lignocellulose-bioconverting and xylose-fermenting yeast Pichia stipitis.</title>
        <authorList>
            <person name="Jeffries T.W."/>
            <person name="Grigoriev I.V."/>
            <person name="Grimwood J."/>
            <person name="Laplaza J.M."/>
            <person name="Aerts A."/>
            <person name="Salamov A."/>
            <person name="Schmutz J."/>
            <person name="Lindquist E."/>
            <person name="Dehal P."/>
            <person name="Shapiro H."/>
            <person name="Jin Y.-S."/>
            <person name="Passoth V."/>
            <person name="Richardson P.M."/>
        </authorList>
    </citation>
    <scope>NUCLEOTIDE SEQUENCE [LARGE SCALE GENOMIC DNA]</scope>
    <source>
        <strain>ATCC 58785 / CBS 6054 / NBRC 10063 / NRRL Y-11545</strain>
    </source>
</reference>
<evidence type="ECO:0000250" key="1"/>
<evidence type="ECO:0000250" key="2">
    <source>
        <dbReference type="UniProtKB" id="P38626"/>
    </source>
</evidence>
<evidence type="ECO:0000255" key="3"/>
<evidence type="ECO:0000255" key="4">
    <source>
        <dbReference type="PROSITE-ProRule" id="PRU00716"/>
    </source>
</evidence>
<evidence type="ECO:0000305" key="5"/>
<proteinExistence type="inferred from homology"/>
<name>NCB5R_PICST</name>
<accession>A3GF86</accession>